<name>PROB_SERP5</name>
<organism>
    <name type="scientific">Serratia proteamaculans (strain 568)</name>
    <dbReference type="NCBI Taxonomy" id="399741"/>
    <lineage>
        <taxon>Bacteria</taxon>
        <taxon>Pseudomonadati</taxon>
        <taxon>Pseudomonadota</taxon>
        <taxon>Gammaproteobacteria</taxon>
        <taxon>Enterobacterales</taxon>
        <taxon>Yersiniaceae</taxon>
        <taxon>Serratia</taxon>
    </lineage>
</organism>
<feature type="chain" id="PRO_1000081104" description="Glutamate 5-kinase">
    <location>
        <begin position="1"/>
        <end position="367"/>
    </location>
</feature>
<feature type="domain" description="PUA" evidence="1">
    <location>
        <begin position="275"/>
        <end position="353"/>
    </location>
</feature>
<feature type="binding site" evidence="1">
    <location>
        <position position="10"/>
    </location>
    <ligand>
        <name>ATP</name>
        <dbReference type="ChEBI" id="CHEBI:30616"/>
    </ligand>
</feature>
<feature type="binding site" evidence="1">
    <location>
        <position position="50"/>
    </location>
    <ligand>
        <name>substrate</name>
    </ligand>
</feature>
<feature type="binding site" evidence="1">
    <location>
        <position position="137"/>
    </location>
    <ligand>
        <name>substrate</name>
    </ligand>
</feature>
<feature type="binding site" evidence="1">
    <location>
        <position position="149"/>
    </location>
    <ligand>
        <name>substrate</name>
    </ligand>
</feature>
<feature type="binding site" evidence="1">
    <location>
        <begin position="169"/>
        <end position="170"/>
    </location>
    <ligand>
        <name>ATP</name>
        <dbReference type="ChEBI" id="CHEBI:30616"/>
    </ligand>
</feature>
<feature type="binding site" evidence="1">
    <location>
        <begin position="211"/>
        <end position="217"/>
    </location>
    <ligand>
        <name>ATP</name>
        <dbReference type="ChEBI" id="CHEBI:30616"/>
    </ligand>
</feature>
<keyword id="KW-0028">Amino-acid biosynthesis</keyword>
<keyword id="KW-0067">ATP-binding</keyword>
<keyword id="KW-0963">Cytoplasm</keyword>
<keyword id="KW-0418">Kinase</keyword>
<keyword id="KW-0547">Nucleotide-binding</keyword>
<keyword id="KW-0641">Proline biosynthesis</keyword>
<keyword id="KW-0808">Transferase</keyword>
<accession>A8GAD3</accession>
<evidence type="ECO:0000255" key="1">
    <source>
        <dbReference type="HAMAP-Rule" id="MF_00456"/>
    </source>
</evidence>
<proteinExistence type="inferred from homology"/>
<protein>
    <recommendedName>
        <fullName evidence="1">Glutamate 5-kinase</fullName>
        <ecNumber evidence="1">2.7.2.11</ecNumber>
    </recommendedName>
    <alternativeName>
        <fullName evidence="1">Gamma-glutamyl kinase</fullName>
        <shortName evidence="1">GK</shortName>
    </alternativeName>
</protein>
<dbReference type="EC" id="2.7.2.11" evidence="1"/>
<dbReference type="EMBL" id="CP000826">
    <property type="protein sequence ID" value="ABV40073.1"/>
    <property type="molecule type" value="Genomic_DNA"/>
</dbReference>
<dbReference type="SMR" id="A8GAD3"/>
<dbReference type="STRING" id="399741.Spro_0967"/>
<dbReference type="KEGG" id="spe:Spro_0967"/>
<dbReference type="eggNOG" id="COG0263">
    <property type="taxonomic scope" value="Bacteria"/>
</dbReference>
<dbReference type="HOGENOM" id="CLU_025400_2_0_6"/>
<dbReference type="OrthoDB" id="9804434at2"/>
<dbReference type="UniPathway" id="UPA00098">
    <property type="reaction ID" value="UER00359"/>
</dbReference>
<dbReference type="GO" id="GO:0005829">
    <property type="term" value="C:cytosol"/>
    <property type="evidence" value="ECO:0007669"/>
    <property type="project" value="TreeGrafter"/>
</dbReference>
<dbReference type="GO" id="GO:0005524">
    <property type="term" value="F:ATP binding"/>
    <property type="evidence" value="ECO:0007669"/>
    <property type="project" value="UniProtKB-KW"/>
</dbReference>
<dbReference type="GO" id="GO:0004349">
    <property type="term" value="F:glutamate 5-kinase activity"/>
    <property type="evidence" value="ECO:0007669"/>
    <property type="project" value="UniProtKB-UniRule"/>
</dbReference>
<dbReference type="GO" id="GO:0003723">
    <property type="term" value="F:RNA binding"/>
    <property type="evidence" value="ECO:0007669"/>
    <property type="project" value="InterPro"/>
</dbReference>
<dbReference type="GO" id="GO:0055129">
    <property type="term" value="P:L-proline biosynthetic process"/>
    <property type="evidence" value="ECO:0007669"/>
    <property type="project" value="UniProtKB-UniRule"/>
</dbReference>
<dbReference type="CDD" id="cd04242">
    <property type="entry name" value="AAK_G5K_ProB"/>
    <property type="match status" value="1"/>
</dbReference>
<dbReference type="CDD" id="cd21157">
    <property type="entry name" value="PUA_G5K"/>
    <property type="match status" value="1"/>
</dbReference>
<dbReference type="FunFam" id="2.30.130.10:FF:000003">
    <property type="entry name" value="Glutamate 5-kinase"/>
    <property type="match status" value="1"/>
</dbReference>
<dbReference type="FunFam" id="3.40.1160.10:FF:000006">
    <property type="entry name" value="Glutamate 5-kinase"/>
    <property type="match status" value="1"/>
</dbReference>
<dbReference type="Gene3D" id="3.40.1160.10">
    <property type="entry name" value="Acetylglutamate kinase-like"/>
    <property type="match status" value="2"/>
</dbReference>
<dbReference type="Gene3D" id="2.30.130.10">
    <property type="entry name" value="PUA domain"/>
    <property type="match status" value="1"/>
</dbReference>
<dbReference type="HAMAP" id="MF_00456">
    <property type="entry name" value="ProB"/>
    <property type="match status" value="1"/>
</dbReference>
<dbReference type="InterPro" id="IPR036393">
    <property type="entry name" value="AceGlu_kinase-like_sf"/>
</dbReference>
<dbReference type="InterPro" id="IPR001048">
    <property type="entry name" value="Asp/Glu/Uridylate_kinase"/>
</dbReference>
<dbReference type="InterPro" id="IPR041739">
    <property type="entry name" value="G5K_ProB"/>
</dbReference>
<dbReference type="InterPro" id="IPR001057">
    <property type="entry name" value="Glu/AcGlu_kinase"/>
</dbReference>
<dbReference type="InterPro" id="IPR011529">
    <property type="entry name" value="Glu_5kinase"/>
</dbReference>
<dbReference type="InterPro" id="IPR005715">
    <property type="entry name" value="Glu_5kinase/COase_Synthase"/>
</dbReference>
<dbReference type="InterPro" id="IPR019797">
    <property type="entry name" value="Glutamate_5-kinase_CS"/>
</dbReference>
<dbReference type="InterPro" id="IPR002478">
    <property type="entry name" value="PUA"/>
</dbReference>
<dbReference type="InterPro" id="IPR015947">
    <property type="entry name" value="PUA-like_sf"/>
</dbReference>
<dbReference type="InterPro" id="IPR036974">
    <property type="entry name" value="PUA_sf"/>
</dbReference>
<dbReference type="NCBIfam" id="TIGR01027">
    <property type="entry name" value="proB"/>
    <property type="match status" value="1"/>
</dbReference>
<dbReference type="PANTHER" id="PTHR43654">
    <property type="entry name" value="GLUTAMATE 5-KINASE"/>
    <property type="match status" value="1"/>
</dbReference>
<dbReference type="PANTHER" id="PTHR43654:SF1">
    <property type="entry name" value="ISOPENTENYL PHOSPHATE KINASE"/>
    <property type="match status" value="1"/>
</dbReference>
<dbReference type="Pfam" id="PF00696">
    <property type="entry name" value="AA_kinase"/>
    <property type="match status" value="1"/>
</dbReference>
<dbReference type="Pfam" id="PF01472">
    <property type="entry name" value="PUA"/>
    <property type="match status" value="1"/>
</dbReference>
<dbReference type="PIRSF" id="PIRSF000729">
    <property type="entry name" value="GK"/>
    <property type="match status" value="1"/>
</dbReference>
<dbReference type="PRINTS" id="PR00474">
    <property type="entry name" value="GLU5KINASE"/>
</dbReference>
<dbReference type="SMART" id="SM00359">
    <property type="entry name" value="PUA"/>
    <property type="match status" value="1"/>
</dbReference>
<dbReference type="SUPFAM" id="SSF53633">
    <property type="entry name" value="Carbamate kinase-like"/>
    <property type="match status" value="1"/>
</dbReference>
<dbReference type="SUPFAM" id="SSF88697">
    <property type="entry name" value="PUA domain-like"/>
    <property type="match status" value="1"/>
</dbReference>
<dbReference type="PROSITE" id="PS00902">
    <property type="entry name" value="GLUTAMATE_5_KINASE"/>
    <property type="match status" value="1"/>
</dbReference>
<dbReference type="PROSITE" id="PS50890">
    <property type="entry name" value="PUA"/>
    <property type="match status" value="1"/>
</dbReference>
<sequence>MNGSQTLVVKLGTSVLTGGSLRLNRAHIVELVRQCAQQHAAGHRIVIVTSGAIAAGREHLGYPELPATIASKQLLAAVGQSRLIQLWEQLFSIYGIHVGQMLLTRADLEDRERFLNARDTMTALLDNRIVPVINENDAVATAEIKVGDNDNLSALAAILAGADKLLLLTDQQGLYTADPRNNPQAELIREVHGIDDALRAIAGDSVSGLGTGGMGTKLQAADVACRAGIDVIIAAGSKPGVVADVIEGKPVGTRFHALETPLENRKRWIFGAPPAGEITVDDGAVDAIMARGSSLLPKGIREVKGDFSRGEVIRIRNLTGRDLAHGVSRYNSDAMRMIAGHHSQEISEILGYEYGPVAVHRDDMIVS</sequence>
<comment type="function">
    <text evidence="1">Catalyzes the transfer of a phosphate group to glutamate to form L-glutamate 5-phosphate.</text>
</comment>
<comment type="catalytic activity">
    <reaction evidence="1">
        <text>L-glutamate + ATP = L-glutamyl 5-phosphate + ADP</text>
        <dbReference type="Rhea" id="RHEA:14877"/>
        <dbReference type="ChEBI" id="CHEBI:29985"/>
        <dbReference type="ChEBI" id="CHEBI:30616"/>
        <dbReference type="ChEBI" id="CHEBI:58274"/>
        <dbReference type="ChEBI" id="CHEBI:456216"/>
        <dbReference type="EC" id="2.7.2.11"/>
    </reaction>
</comment>
<comment type="pathway">
    <text evidence="1">Amino-acid biosynthesis; L-proline biosynthesis; L-glutamate 5-semialdehyde from L-glutamate: step 1/2.</text>
</comment>
<comment type="subcellular location">
    <subcellularLocation>
        <location evidence="1">Cytoplasm</location>
    </subcellularLocation>
</comment>
<comment type="similarity">
    <text evidence="1">Belongs to the glutamate 5-kinase family.</text>
</comment>
<gene>
    <name evidence="1" type="primary">proB</name>
    <name type="ordered locus">Spro_0967</name>
</gene>
<reference key="1">
    <citation type="submission" date="2007-09" db="EMBL/GenBank/DDBJ databases">
        <title>Complete sequence of chromosome of Serratia proteamaculans 568.</title>
        <authorList>
            <consortium name="US DOE Joint Genome Institute"/>
            <person name="Copeland A."/>
            <person name="Lucas S."/>
            <person name="Lapidus A."/>
            <person name="Barry K."/>
            <person name="Glavina del Rio T."/>
            <person name="Dalin E."/>
            <person name="Tice H."/>
            <person name="Pitluck S."/>
            <person name="Chain P."/>
            <person name="Malfatti S."/>
            <person name="Shin M."/>
            <person name="Vergez L."/>
            <person name="Schmutz J."/>
            <person name="Larimer F."/>
            <person name="Land M."/>
            <person name="Hauser L."/>
            <person name="Kyrpides N."/>
            <person name="Kim E."/>
            <person name="Taghavi S."/>
            <person name="Newman L."/>
            <person name="Vangronsveld J."/>
            <person name="van der Lelie D."/>
            <person name="Richardson P."/>
        </authorList>
    </citation>
    <scope>NUCLEOTIDE SEQUENCE [LARGE SCALE GENOMIC DNA]</scope>
    <source>
        <strain>568</strain>
    </source>
</reference>